<keyword id="KW-0030">Aminoacyl-tRNA synthetase</keyword>
<keyword id="KW-0067">ATP-binding</keyword>
<keyword id="KW-0963">Cytoplasm</keyword>
<keyword id="KW-0436">Ligase</keyword>
<keyword id="KW-0479">Metal-binding</keyword>
<keyword id="KW-0547">Nucleotide-binding</keyword>
<keyword id="KW-0648">Protein biosynthesis</keyword>
<keyword id="KW-0694">RNA-binding</keyword>
<keyword id="KW-0820">tRNA-binding</keyword>
<keyword id="KW-0862">Zinc</keyword>
<dbReference type="EC" id="6.1.1.10" evidence="1"/>
<dbReference type="EMBL" id="CP001011">
    <property type="protein sequence ID" value="ACB93085.1"/>
    <property type="molecule type" value="Genomic_DNA"/>
</dbReference>
<dbReference type="SMR" id="B2I7S0"/>
<dbReference type="KEGG" id="xfn:XfasM23_1678"/>
<dbReference type="HOGENOM" id="CLU_009710_7_0_6"/>
<dbReference type="Proteomes" id="UP000001698">
    <property type="component" value="Chromosome"/>
</dbReference>
<dbReference type="GO" id="GO:0005829">
    <property type="term" value="C:cytosol"/>
    <property type="evidence" value="ECO:0007669"/>
    <property type="project" value="TreeGrafter"/>
</dbReference>
<dbReference type="GO" id="GO:0005524">
    <property type="term" value="F:ATP binding"/>
    <property type="evidence" value="ECO:0007669"/>
    <property type="project" value="UniProtKB-UniRule"/>
</dbReference>
<dbReference type="GO" id="GO:0046872">
    <property type="term" value="F:metal ion binding"/>
    <property type="evidence" value="ECO:0007669"/>
    <property type="project" value="UniProtKB-KW"/>
</dbReference>
<dbReference type="GO" id="GO:0004825">
    <property type="term" value="F:methionine-tRNA ligase activity"/>
    <property type="evidence" value="ECO:0007669"/>
    <property type="project" value="UniProtKB-UniRule"/>
</dbReference>
<dbReference type="GO" id="GO:0000049">
    <property type="term" value="F:tRNA binding"/>
    <property type="evidence" value="ECO:0007669"/>
    <property type="project" value="UniProtKB-KW"/>
</dbReference>
<dbReference type="GO" id="GO:0006431">
    <property type="term" value="P:methionyl-tRNA aminoacylation"/>
    <property type="evidence" value="ECO:0007669"/>
    <property type="project" value="UniProtKB-UniRule"/>
</dbReference>
<dbReference type="CDD" id="cd07957">
    <property type="entry name" value="Anticodon_Ia_Met"/>
    <property type="match status" value="1"/>
</dbReference>
<dbReference type="CDD" id="cd00814">
    <property type="entry name" value="MetRS_core"/>
    <property type="match status" value="1"/>
</dbReference>
<dbReference type="CDD" id="cd02800">
    <property type="entry name" value="tRNA_bind_EcMetRS_like"/>
    <property type="match status" value="1"/>
</dbReference>
<dbReference type="FunFam" id="1.10.730.10:FF:000005">
    <property type="entry name" value="Methionine--tRNA ligase"/>
    <property type="match status" value="1"/>
</dbReference>
<dbReference type="FunFam" id="2.20.28.20:FF:000001">
    <property type="entry name" value="Methionine--tRNA ligase"/>
    <property type="match status" value="1"/>
</dbReference>
<dbReference type="FunFam" id="2.40.50.140:FF:000042">
    <property type="entry name" value="Methionine--tRNA ligase"/>
    <property type="match status" value="1"/>
</dbReference>
<dbReference type="Gene3D" id="3.40.50.620">
    <property type="entry name" value="HUPs"/>
    <property type="match status" value="1"/>
</dbReference>
<dbReference type="Gene3D" id="1.10.730.10">
    <property type="entry name" value="Isoleucyl-tRNA Synthetase, Domain 1"/>
    <property type="match status" value="1"/>
</dbReference>
<dbReference type="Gene3D" id="2.20.28.20">
    <property type="entry name" value="Methionyl-tRNA synthetase, Zn-domain"/>
    <property type="match status" value="1"/>
</dbReference>
<dbReference type="Gene3D" id="2.40.50.140">
    <property type="entry name" value="Nucleic acid-binding proteins"/>
    <property type="match status" value="1"/>
</dbReference>
<dbReference type="HAMAP" id="MF_00098">
    <property type="entry name" value="Met_tRNA_synth_type1"/>
    <property type="match status" value="1"/>
</dbReference>
<dbReference type="InterPro" id="IPR001412">
    <property type="entry name" value="aa-tRNA-synth_I_CS"/>
</dbReference>
<dbReference type="InterPro" id="IPR041872">
    <property type="entry name" value="Anticodon_Met"/>
</dbReference>
<dbReference type="InterPro" id="IPR004495">
    <property type="entry name" value="Met-tRNA-synth_bsu_C"/>
</dbReference>
<dbReference type="InterPro" id="IPR023458">
    <property type="entry name" value="Met-tRNA_ligase_1"/>
</dbReference>
<dbReference type="InterPro" id="IPR014758">
    <property type="entry name" value="Met-tRNA_synth"/>
</dbReference>
<dbReference type="InterPro" id="IPR015413">
    <property type="entry name" value="Methionyl/Leucyl_tRNA_Synth"/>
</dbReference>
<dbReference type="InterPro" id="IPR033911">
    <property type="entry name" value="MetRS_core"/>
</dbReference>
<dbReference type="InterPro" id="IPR029038">
    <property type="entry name" value="MetRS_Zn"/>
</dbReference>
<dbReference type="InterPro" id="IPR012340">
    <property type="entry name" value="NA-bd_OB-fold"/>
</dbReference>
<dbReference type="InterPro" id="IPR014729">
    <property type="entry name" value="Rossmann-like_a/b/a_fold"/>
</dbReference>
<dbReference type="InterPro" id="IPR002547">
    <property type="entry name" value="tRNA-bd_dom"/>
</dbReference>
<dbReference type="InterPro" id="IPR009080">
    <property type="entry name" value="tRNAsynth_Ia_anticodon-bd"/>
</dbReference>
<dbReference type="NCBIfam" id="TIGR00398">
    <property type="entry name" value="metG"/>
    <property type="match status" value="1"/>
</dbReference>
<dbReference type="NCBIfam" id="TIGR00399">
    <property type="entry name" value="metG_C_term"/>
    <property type="match status" value="1"/>
</dbReference>
<dbReference type="NCBIfam" id="NF001100">
    <property type="entry name" value="PRK00133.1"/>
    <property type="match status" value="1"/>
</dbReference>
<dbReference type="PANTHER" id="PTHR45765">
    <property type="entry name" value="METHIONINE--TRNA LIGASE"/>
    <property type="match status" value="1"/>
</dbReference>
<dbReference type="PANTHER" id="PTHR45765:SF1">
    <property type="entry name" value="METHIONINE--TRNA LIGASE, CYTOPLASMIC"/>
    <property type="match status" value="1"/>
</dbReference>
<dbReference type="Pfam" id="PF19303">
    <property type="entry name" value="Anticodon_3"/>
    <property type="match status" value="1"/>
</dbReference>
<dbReference type="Pfam" id="PF09334">
    <property type="entry name" value="tRNA-synt_1g"/>
    <property type="match status" value="1"/>
</dbReference>
<dbReference type="Pfam" id="PF01588">
    <property type="entry name" value="tRNA_bind"/>
    <property type="match status" value="1"/>
</dbReference>
<dbReference type="PRINTS" id="PR01041">
    <property type="entry name" value="TRNASYNTHMET"/>
</dbReference>
<dbReference type="SUPFAM" id="SSF47323">
    <property type="entry name" value="Anticodon-binding domain of a subclass of class I aminoacyl-tRNA synthetases"/>
    <property type="match status" value="1"/>
</dbReference>
<dbReference type="SUPFAM" id="SSF57770">
    <property type="entry name" value="Methionyl-tRNA synthetase (MetRS), Zn-domain"/>
    <property type="match status" value="1"/>
</dbReference>
<dbReference type="SUPFAM" id="SSF50249">
    <property type="entry name" value="Nucleic acid-binding proteins"/>
    <property type="match status" value="1"/>
</dbReference>
<dbReference type="SUPFAM" id="SSF52374">
    <property type="entry name" value="Nucleotidylyl transferase"/>
    <property type="match status" value="1"/>
</dbReference>
<dbReference type="PROSITE" id="PS00178">
    <property type="entry name" value="AA_TRNA_LIGASE_I"/>
    <property type="match status" value="1"/>
</dbReference>
<dbReference type="PROSITE" id="PS50886">
    <property type="entry name" value="TRBD"/>
    <property type="match status" value="1"/>
</dbReference>
<proteinExistence type="inferred from homology"/>
<reference key="1">
    <citation type="journal article" date="2010" name="J. Bacteriol.">
        <title>Whole genome sequences of two Xylella fastidiosa strains (M12 and M23) causing almond leaf scorch disease in California.</title>
        <authorList>
            <person name="Chen J."/>
            <person name="Xie G."/>
            <person name="Han S."/>
            <person name="Chertkov O."/>
            <person name="Sims D."/>
            <person name="Civerolo E.L."/>
        </authorList>
    </citation>
    <scope>NUCLEOTIDE SEQUENCE [LARGE SCALE GENOMIC DNA]</scope>
    <source>
        <strain>M23</strain>
    </source>
</reference>
<evidence type="ECO:0000255" key="1">
    <source>
        <dbReference type="HAMAP-Rule" id="MF_00098"/>
    </source>
</evidence>
<evidence type="ECO:0000256" key="2">
    <source>
        <dbReference type="SAM" id="MobiDB-lite"/>
    </source>
</evidence>
<feature type="chain" id="PRO_1000093743" description="Methionine--tRNA ligase">
    <location>
        <begin position="1"/>
        <end position="702"/>
    </location>
</feature>
<feature type="domain" description="tRNA-binding" evidence="1">
    <location>
        <begin position="599"/>
        <end position="702"/>
    </location>
</feature>
<feature type="region of interest" description="Disordered" evidence="2">
    <location>
        <begin position="562"/>
        <end position="593"/>
    </location>
</feature>
<feature type="short sequence motif" description="'HIGH' region">
    <location>
        <begin position="23"/>
        <end position="33"/>
    </location>
</feature>
<feature type="short sequence motif" description="'KMSKS' region">
    <location>
        <begin position="341"/>
        <end position="345"/>
    </location>
</feature>
<feature type="compositionally biased region" description="Polar residues" evidence="2">
    <location>
        <begin position="569"/>
        <end position="578"/>
    </location>
</feature>
<feature type="binding site" evidence="1">
    <location>
        <position position="154"/>
    </location>
    <ligand>
        <name>Zn(2+)</name>
        <dbReference type="ChEBI" id="CHEBI:29105"/>
    </ligand>
</feature>
<feature type="binding site" evidence="1">
    <location>
        <position position="157"/>
    </location>
    <ligand>
        <name>Zn(2+)</name>
        <dbReference type="ChEBI" id="CHEBI:29105"/>
    </ligand>
</feature>
<feature type="binding site" evidence="1">
    <location>
        <position position="167"/>
    </location>
    <ligand>
        <name>Zn(2+)</name>
        <dbReference type="ChEBI" id="CHEBI:29105"/>
    </ligand>
</feature>
<feature type="binding site" evidence="1">
    <location>
        <position position="170"/>
    </location>
    <ligand>
        <name>Zn(2+)</name>
        <dbReference type="ChEBI" id="CHEBI:29105"/>
    </ligand>
</feature>
<feature type="binding site" evidence="1">
    <location>
        <position position="344"/>
    </location>
    <ligand>
        <name>ATP</name>
        <dbReference type="ChEBI" id="CHEBI:30616"/>
    </ligand>
</feature>
<name>SYM_XYLF2</name>
<accession>B2I7S0</accession>
<protein>
    <recommendedName>
        <fullName evidence="1">Methionine--tRNA ligase</fullName>
        <ecNumber evidence="1">6.1.1.10</ecNumber>
    </recommendedName>
    <alternativeName>
        <fullName evidence="1">Methionyl-tRNA synthetase</fullName>
        <shortName evidence="1">MetRS</shortName>
    </alternativeName>
</protein>
<organism>
    <name type="scientific">Xylella fastidiosa (strain M23)</name>
    <dbReference type="NCBI Taxonomy" id="405441"/>
    <lineage>
        <taxon>Bacteria</taxon>
        <taxon>Pseudomonadati</taxon>
        <taxon>Pseudomonadota</taxon>
        <taxon>Gammaproteobacteria</taxon>
        <taxon>Lysobacterales</taxon>
        <taxon>Lysobacteraceae</taxon>
        <taxon>Xylella</taxon>
    </lineage>
</organism>
<sequence length="702" mass="77526">MRYSHPLVPLSFMTTALVTTALPYANGPLHLGHLVGYIQADIWVRARRLGGHNTWFVCADDTHGTPIMLAAEKAGMPPEAFIATTQASHERDFAAFNVAFDHYDSTHSPVNRHLTEQSYLTLKQAGHITCRSVAQFYDPAKGMFLPDRYVKGTCPNCGATDQYGDNCEACGATYDPTELKNPYSVISGATPELRDSEHFFFEVAHFDTFLRHWLSGDVALPSVKNKLKEWLDAKGGLRPWDISRDAPYFGFKIPDQPGKYFYVWLDAPIGYLCSFKTLCTRIGEDFDTHLRSGTTTELHHFIGKDIVNFHALFWPAVLHGTGHRAPTRLHVNGYLTVDGAKMSKSRGTFIMARTYLDAGLEPDALRYYFAAKSSGDVDDLDLNLSDFVARVNADLVGKLVNLASRCASFIGTRFNGQLADTLPDRIQYDRFVAALTPIRDAYERNDTASAIRQTMQLADEANKYIDETKPWIIAKQHHADAQLHAVCTQGLNLFRVLITALKPILPHTSIQAETFLAAPVTAWQDVNQPLTGGHTIQPYSPLFTRIDKKIIEVMINASKDTLAPPPASAKQQNASMSNTAPPPTAEEPETTAPTIGIDDFAKLDLRIGKVLVCEYVEGSDKLLRFELDAGPLGKRQIFSGIRASYSNPEALIGRNVVFIANLAPRKMRFGISQGMILSAGFDNGTLALLDADSSAQPGMPVR</sequence>
<gene>
    <name evidence="1" type="primary">metG</name>
    <name type="ordered locus">XfasM23_1678</name>
</gene>
<comment type="function">
    <text evidence="1">Is required not only for elongation of protein synthesis but also for the initiation of all mRNA translation through initiator tRNA(fMet) aminoacylation.</text>
</comment>
<comment type="catalytic activity">
    <reaction evidence="1">
        <text>tRNA(Met) + L-methionine + ATP = L-methionyl-tRNA(Met) + AMP + diphosphate</text>
        <dbReference type="Rhea" id="RHEA:13481"/>
        <dbReference type="Rhea" id="RHEA-COMP:9667"/>
        <dbReference type="Rhea" id="RHEA-COMP:9698"/>
        <dbReference type="ChEBI" id="CHEBI:30616"/>
        <dbReference type="ChEBI" id="CHEBI:33019"/>
        <dbReference type="ChEBI" id="CHEBI:57844"/>
        <dbReference type="ChEBI" id="CHEBI:78442"/>
        <dbReference type="ChEBI" id="CHEBI:78530"/>
        <dbReference type="ChEBI" id="CHEBI:456215"/>
        <dbReference type="EC" id="6.1.1.10"/>
    </reaction>
</comment>
<comment type="cofactor">
    <cofactor evidence="1">
        <name>Zn(2+)</name>
        <dbReference type="ChEBI" id="CHEBI:29105"/>
    </cofactor>
    <text evidence="1">Binds 1 zinc ion per subunit.</text>
</comment>
<comment type="subunit">
    <text evidence="1">Homodimer.</text>
</comment>
<comment type="subcellular location">
    <subcellularLocation>
        <location evidence="1">Cytoplasm</location>
    </subcellularLocation>
</comment>
<comment type="similarity">
    <text evidence="1">Belongs to the class-I aminoacyl-tRNA synthetase family. MetG type 1 subfamily.</text>
</comment>